<dbReference type="EC" id="6.3.5.-" evidence="1"/>
<dbReference type="EMBL" id="CP001068">
    <property type="protein sequence ID" value="ACD28809.1"/>
    <property type="molecule type" value="Genomic_DNA"/>
</dbReference>
<dbReference type="SMR" id="B2U7V6"/>
<dbReference type="STRING" id="402626.Rpic_3691"/>
<dbReference type="KEGG" id="rpi:Rpic_3691"/>
<dbReference type="eggNOG" id="COG0721">
    <property type="taxonomic scope" value="Bacteria"/>
</dbReference>
<dbReference type="HOGENOM" id="CLU_105899_2_2_4"/>
<dbReference type="GO" id="GO:0050566">
    <property type="term" value="F:asparaginyl-tRNA synthase (glutamine-hydrolyzing) activity"/>
    <property type="evidence" value="ECO:0007669"/>
    <property type="project" value="RHEA"/>
</dbReference>
<dbReference type="GO" id="GO:0005524">
    <property type="term" value="F:ATP binding"/>
    <property type="evidence" value="ECO:0007669"/>
    <property type="project" value="UniProtKB-KW"/>
</dbReference>
<dbReference type="GO" id="GO:0050567">
    <property type="term" value="F:glutaminyl-tRNA synthase (glutamine-hydrolyzing) activity"/>
    <property type="evidence" value="ECO:0007669"/>
    <property type="project" value="UniProtKB-UniRule"/>
</dbReference>
<dbReference type="GO" id="GO:0070681">
    <property type="term" value="P:glutaminyl-tRNAGln biosynthesis via transamidation"/>
    <property type="evidence" value="ECO:0007669"/>
    <property type="project" value="TreeGrafter"/>
</dbReference>
<dbReference type="GO" id="GO:0006450">
    <property type="term" value="P:regulation of translational fidelity"/>
    <property type="evidence" value="ECO:0007669"/>
    <property type="project" value="InterPro"/>
</dbReference>
<dbReference type="GO" id="GO:0006412">
    <property type="term" value="P:translation"/>
    <property type="evidence" value="ECO:0007669"/>
    <property type="project" value="UniProtKB-UniRule"/>
</dbReference>
<dbReference type="Gene3D" id="1.10.20.60">
    <property type="entry name" value="Glu-tRNAGln amidotransferase C subunit, N-terminal domain"/>
    <property type="match status" value="1"/>
</dbReference>
<dbReference type="HAMAP" id="MF_00122">
    <property type="entry name" value="GatC"/>
    <property type="match status" value="1"/>
</dbReference>
<dbReference type="InterPro" id="IPR036113">
    <property type="entry name" value="Asp/Glu-ADT_sf_sub_c"/>
</dbReference>
<dbReference type="InterPro" id="IPR003837">
    <property type="entry name" value="GatC"/>
</dbReference>
<dbReference type="NCBIfam" id="TIGR00135">
    <property type="entry name" value="gatC"/>
    <property type="match status" value="1"/>
</dbReference>
<dbReference type="PANTHER" id="PTHR15004">
    <property type="entry name" value="GLUTAMYL-TRNA(GLN) AMIDOTRANSFERASE SUBUNIT C, MITOCHONDRIAL"/>
    <property type="match status" value="1"/>
</dbReference>
<dbReference type="PANTHER" id="PTHR15004:SF0">
    <property type="entry name" value="GLUTAMYL-TRNA(GLN) AMIDOTRANSFERASE SUBUNIT C, MITOCHONDRIAL"/>
    <property type="match status" value="1"/>
</dbReference>
<dbReference type="Pfam" id="PF02686">
    <property type="entry name" value="GatC"/>
    <property type="match status" value="1"/>
</dbReference>
<dbReference type="SUPFAM" id="SSF141000">
    <property type="entry name" value="Glu-tRNAGln amidotransferase C subunit"/>
    <property type="match status" value="1"/>
</dbReference>
<feature type="chain" id="PRO_1000095309" description="Aspartyl/glutamyl-tRNA(Asn/Gln) amidotransferase subunit C">
    <location>
        <begin position="1"/>
        <end position="99"/>
    </location>
</feature>
<protein>
    <recommendedName>
        <fullName evidence="1">Aspartyl/glutamyl-tRNA(Asn/Gln) amidotransferase subunit C</fullName>
        <shortName evidence="1">Asp/Glu-ADT subunit C</shortName>
        <ecNumber evidence="1">6.3.5.-</ecNumber>
    </recommendedName>
</protein>
<keyword id="KW-0067">ATP-binding</keyword>
<keyword id="KW-0436">Ligase</keyword>
<keyword id="KW-0547">Nucleotide-binding</keyword>
<keyword id="KW-0648">Protein biosynthesis</keyword>
<reference key="1">
    <citation type="submission" date="2008-05" db="EMBL/GenBank/DDBJ databases">
        <title>Complete sequence of chromosome 1 of Ralstonia pickettii 12J.</title>
        <authorList>
            <person name="Lucas S."/>
            <person name="Copeland A."/>
            <person name="Lapidus A."/>
            <person name="Glavina del Rio T."/>
            <person name="Dalin E."/>
            <person name="Tice H."/>
            <person name="Bruce D."/>
            <person name="Goodwin L."/>
            <person name="Pitluck S."/>
            <person name="Meincke L."/>
            <person name="Brettin T."/>
            <person name="Detter J.C."/>
            <person name="Han C."/>
            <person name="Kuske C.R."/>
            <person name="Schmutz J."/>
            <person name="Larimer F."/>
            <person name="Land M."/>
            <person name="Hauser L."/>
            <person name="Kyrpides N."/>
            <person name="Mikhailova N."/>
            <person name="Marsh T."/>
            <person name="Richardson P."/>
        </authorList>
    </citation>
    <scope>NUCLEOTIDE SEQUENCE [LARGE SCALE GENOMIC DNA]</scope>
    <source>
        <strain>12J</strain>
    </source>
</reference>
<gene>
    <name evidence="1" type="primary">gatC</name>
    <name type="ordered locus">Rpic_3691</name>
</gene>
<name>GATC_RALPJ</name>
<proteinExistence type="inferred from homology"/>
<accession>B2U7V6</accession>
<organism>
    <name type="scientific">Ralstonia pickettii (strain 12J)</name>
    <dbReference type="NCBI Taxonomy" id="402626"/>
    <lineage>
        <taxon>Bacteria</taxon>
        <taxon>Pseudomonadati</taxon>
        <taxon>Pseudomonadota</taxon>
        <taxon>Betaproteobacteria</taxon>
        <taxon>Burkholderiales</taxon>
        <taxon>Burkholderiaceae</taxon>
        <taxon>Ralstonia</taxon>
    </lineage>
</organism>
<evidence type="ECO:0000255" key="1">
    <source>
        <dbReference type="HAMAP-Rule" id="MF_00122"/>
    </source>
</evidence>
<sequence length="99" mass="10979">MALELSDVKRIAHLARIEVSEGEAAQTLTQLNQFFSLVEQMQAVDTTGIEPMAHPIEQVQAQAQRLRDDAVTEADRRADYQQCAPATEAGLYLVPKVIE</sequence>
<comment type="function">
    <text evidence="1">Allows the formation of correctly charged Asn-tRNA(Asn) or Gln-tRNA(Gln) through the transamidation of misacylated Asp-tRNA(Asn) or Glu-tRNA(Gln) in organisms which lack either or both of asparaginyl-tRNA or glutaminyl-tRNA synthetases. The reaction takes place in the presence of glutamine and ATP through an activated phospho-Asp-tRNA(Asn) or phospho-Glu-tRNA(Gln).</text>
</comment>
<comment type="catalytic activity">
    <reaction evidence="1">
        <text>L-glutamyl-tRNA(Gln) + L-glutamine + ATP + H2O = L-glutaminyl-tRNA(Gln) + L-glutamate + ADP + phosphate + H(+)</text>
        <dbReference type="Rhea" id="RHEA:17521"/>
        <dbReference type="Rhea" id="RHEA-COMP:9681"/>
        <dbReference type="Rhea" id="RHEA-COMP:9684"/>
        <dbReference type="ChEBI" id="CHEBI:15377"/>
        <dbReference type="ChEBI" id="CHEBI:15378"/>
        <dbReference type="ChEBI" id="CHEBI:29985"/>
        <dbReference type="ChEBI" id="CHEBI:30616"/>
        <dbReference type="ChEBI" id="CHEBI:43474"/>
        <dbReference type="ChEBI" id="CHEBI:58359"/>
        <dbReference type="ChEBI" id="CHEBI:78520"/>
        <dbReference type="ChEBI" id="CHEBI:78521"/>
        <dbReference type="ChEBI" id="CHEBI:456216"/>
    </reaction>
</comment>
<comment type="catalytic activity">
    <reaction evidence="1">
        <text>L-aspartyl-tRNA(Asn) + L-glutamine + ATP + H2O = L-asparaginyl-tRNA(Asn) + L-glutamate + ADP + phosphate + 2 H(+)</text>
        <dbReference type="Rhea" id="RHEA:14513"/>
        <dbReference type="Rhea" id="RHEA-COMP:9674"/>
        <dbReference type="Rhea" id="RHEA-COMP:9677"/>
        <dbReference type="ChEBI" id="CHEBI:15377"/>
        <dbReference type="ChEBI" id="CHEBI:15378"/>
        <dbReference type="ChEBI" id="CHEBI:29985"/>
        <dbReference type="ChEBI" id="CHEBI:30616"/>
        <dbReference type="ChEBI" id="CHEBI:43474"/>
        <dbReference type="ChEBI" id="CHEBI:58359"/>
        <dbReference type="ChEBI" id="CHEBI:78515"/>
        <dbReference type="ChEBI" id="CHEBI:78516"/>
        <dbReference type="ChEBI" id="CHEBI:456216"/>
    </reaction>
</comment>
<comment type="subunit">
    <text evidence="1">Heterotrimer of A, B and C subunits.</text>
</comment>
<comment type="similarity">
    <text evidence="1">Belongs to the GatC family.</text>
</comment>